<protein>
    <recommendedName>
        <fullName evidence="6">ATP-dependent rRNA helicase SPB4</fullName>
        <ecNumber evidence="1">3.6.4.13</ecNumber>
    </recommendedName>
</protein>
<keyword id="KW-0067">ATP-binding</keyword>
<keyword id="KW-0175">Coiled coil</keyword>
<keyword id="KW-0347">Helicase</keyword>
<keyword id="KW-0378">Hydrolase</keyword>
<keyword id="KW-0547">Nucleotide-binding</keyword>
<keyword id="KW-0539">Nucleus</keyword>
<keyword id="KW-1185">Reference proteome</keyword>
<keyword id="KW-0690">Ribosome biogenesis</keyword>
<keyword id="KW-0694">RNA-binding</keyword>
<keyword id="KW-0698">rRNA processing</keyword>
<name>SPB4_CHAGB</name>
<accession>Q2GV49</accession>
<sequence>MPPEQVRARKTPRSWGALTPSLAPWILDYLSSMGFEQPTPVQKSCFDIFRGNKDVVVEAVTGSGKTLAFLIPVVERLLRSEDPAKRHHVQAIIISPTRELASQIYNVLVSFLKFHAPSAHLLPHAKGDEKRPATTEPVVVPQLLVGGTTKAAEDLSTFLRLSPNILIGTPGRLAELLSTPYVKAPSSSFEVLVMDEADRLLDLGFSQELTRILGYLPKQRRTGLFSASLSEAVERLITVGLLYPHKITVRVKSLRDGGIVQERKTPMSLQMSYIVTPASQKIPALCQLLERLEPRPSRSIVFFSTCFAVKYFARVLHGILPPGFSIVSLHGKLEPQVREKNFERFVNAASPTVLLTTDIAARGLDIPQVDLVVQHDPPTDTKVFIHRCGRAGRAGRRGLAVVMLQPGREEGYVQLLDVRQTPISPLAKPPVSVTAADADLASSRIRAQARADRDIYQLAQRAFVSWARSYIEHQATSIFRVADLDWADLAQGYGLLELPKMPEVRGLDRSLGLAIDTESIPFRDGAREKKRLAELEQWKKEKAAREAQRASGGGGDATDPLKRKKNEAWSGKHEHEDVKAARREKKRRKREAQRLGDMTEPEREEQRKLDEMIAEVRRRNAEAPTPAAQAAGSGGGGGDEFEGFDD</sequence>
<reference key="1">
    <citation type="journal article" date="2015" name="Genome Announc.">
        <title>Draft genome sequence of the cellulolytic fungus Chaetomium globosum.</title>
        <authorList>
            <person name="Cuomo C.A."/>
            <person name="Untereiner W.A."/>
            <person name="Ma L.-J."/>
            <person name="Grabherr M."/>
            <person name="Birren B.W."/>
        </authorList>
    </citation>
    <scope>NUCLEOTIDE SEQUENCE [LARGE SCALE GENOMIC DNA]</scope>
    <source>
        <strain>ATCC 6205 / CBS 148.51 / DSM 1962 / NBRC 6347 / NRRL 1970</strain>
    </source>
</reference>
<gene>
    <name evidence="1" type="primary">SPB4</name>
    <name type="ORF">CHGG_08155</name>
</gene>
<evidence type="ECO:0000250" key="1">
    <source>
        <dbReference type="UniProtKB" id="P25808"/>
    </source>
</evidence>
<evidence type="ECO:0000255" key="2"/>
<evidence type="ECO:0000255" key="3">
    <source>
        <dbReference type="PROSITE-ProRule" id="PRU00541"/>
    </source>
</evidence>
<evidence type="ECO:0000255" key="4">
    <source>
        <dbReference type="PROSITE-ProRule" id="PRU00542"/>
    </source>
</evidence>
<evidence type="ECO:0000256" key="5">
    <source>
        <dbReference type="SAM" id="MobiDB-lite"/>
    </source>
</evidence>
<evidence type="ECO:0000305" key="6"/>
<feature type="chain" id="PRO_0000256048" description="ATP-dependent rRNA helicase SPB4">
    <location>
        <begin position="1"/>
        <end position="646"/>
    </location>
</feature>
<feature type="domain" description="Helicase ATP-binding" evidence="3">
    <location>
        <begin position="46"/>
        <end position="247"/>
    </location>
</feature>
<feature type="domain" description="Helicase C-terminal" evidence="4">
    <location>
        <begin position="284"/>
        <end position="434"/>
    </location>
</feature>
<feature type="region of interest" description="Disordered" evidence="5">
    <location>
        <begin position="539"/>
        <end position="646"/>
    </location>
</feature>
<feature type="coiled-coil region" evidence="2">
    <location>
        <begin position="572"/>
        <end position="623"/>
    </location>
</feature>
<feature type="short sequence motif" description="Q motif" evidence="6">
    <location>
        <begin position="15"/>
        <end position="43"/>
    </location>
</feature>
<feature type="short sequence motif" description="DEAD box" evidence="6">
    <location>
        <begin position="195"/>
        <end position="198"/>
    </location>
</feature>
<feature type="compositionally biased region" description="Basic and acidic residues" evidence="5">
    <location>
        <begin position="539"/>
        <end position="548"/>
    </location>
</feature>
<feature type="compositionally biased region" description="Basic and acidic residues" evidence="5">
    <location>
        <begin position="566"/>
        <end position="581"/>
    </location>
</feature>
<feature type="compositionally biased region" description="Basic residues" evidence="5">
    <location>
        <begin position="582"/>
        <end position="591"/>
    </location>
</feature>
<feature type="compositionally biased region" description="Basic and acidic residues" evidence="5">
    <location>
        <begin position="600"/>
        <end position="621"/>
    </location>
</feature>
<feature type="compositionally biased region" description="Low complexity" evidence="5">
    <location>
        <begin position="622"/>
        <end position="631"/>
    </location>
</feature>
<feature type="binding site" evidence="3">
    <location>
        <begin position="59"/>
        <end position="66"/>
    </location>
    <ligand>
        <name>ATP</name>
        <dbReference type="ChEBI" id="CHEBI:30616"/>
    </ligand>
</feature>
<proteinExistence type="inferred from homology"/>
<organism>
    <name type="scientific">Chaetomium globosum (strain ATCC 6205 / CBS 148.51 / DSM 1962 / NBRC 6347 / NRRL 1970)</name>
    <name type="common">Soil fungus</name>
    <dbReference type="NCBI Taxonomy" id="306901"/>
    <lineage>
        <taxon>Eukaryota</taxon>
        <taxon>Fungi</taxon>
        <taxon>Dikarya</taxon>
        <taxon>Ascomycota</taxon>
        <taxon>Pezizomycotina</taxon>
        <taxon>Sordariomycetes</taxon>
        <taxon>Sordariomycetidae</taxon>
        <taxon>Sordariales</taxon>
        <taxon>Chaetomiaceae</taxon>
        <taxon>Chaetomium</taxon>
    </lineage>
</organism>
<comment type="function">
    <text evidence="1">ATP-binding RNA helicase involved in the biogenesis of 60S ribosomal subunits. Binds 90S pre-ribosomal particles and dissociates from pre-60S ribosomal particles after processing of 27SB pre-rRNA. Required for the normal formation of 18S rRNA through the processing of pre-rRNAs at sites A0, A1 and A2, and the normal formation of 25S and 5.8S rRNAs through the processing of pre-rRNAs at sites C1 and C2.</text>
</comment>
<comment type="catalytic activity">
    <reaction evidence="1">
        <text>ATP + H2O = ADP + phosphate + H(+)</text>
        <dbReference type="Rhea" id="RHEA:13065"/>
        <dbReference type="ChEBI" id="CHEBI:15377"/>
        <dbReference type="ChEBI" id="CHEBI:15378"/>
        <dbReference type="ChEBI" id="CHEBI:30616"/>
        <dbReference type="ChEBI" id="CHEBI:43474"/>
        <dbReference type="ChEBI" id="CHEBI:456216"/>
        <dbReference type="EC" id="3.6.4.13"/>
    </reaction>
</comment>
<comment type="subunit">
    <text evidence="1">Component of pre-60S ribosomal complexes.</text>
</comment>
<comment type="subcellular location">
    <subcellularLocation>
        <location evidence="1">Nucleus</location>
        <location evidence="1">Nucleolus</location>
    </subcellularLocation>
</comment>
<comment type="domain">
    <text>The Q motif is unique to and characteristic of the DEAD box family of RNA helicases and controls ATP binding and hydrolysis.</text>
</comment>
<comment type="similarity">
    <text evidence="6">Belongs to the DEAD box helicase family. DDX55/SPB4 subfamily.</text>
</comment>
<dbReference type="EC" id="3.6.4.13" evidence="1"/>
<dbReference type="EMBL" id="CH408033">
    <property type="protein sequence ID" value="EAQ86902.1"/>
    <property type="molecule type" value="Genomic_DNA"/>
</dbReference>
<dbReference type="RefSeq" id="XP_001225811.1">
    <property type="nucleotide sequence ID" value="XM_001225810.1"/>
</dbReference>
<dbReference type="SMR" id="Q2GV49"/>
<dbReference type="FunCoup" id="Q2GV49">
    <property type="interactions" value="1032"/>
</dbReference>
<dbReference type="STRING" id="306901.Q2GV49"/>
<dbReference type="GeneID" id="4393902"/>
<dbReference type="VEuPathDB" id="FungiDB:CHGG_08155"/>
<dbReference type="eggNOG" id="KOG0345">
    <property type="taxonomic scope" value="Eukaryota"/>
</dbReference>
<dbReference type="HOGENOM" id="CLU_003041_26_4_1"/>
<dbReference type="InParanoid" id="Q2GV49"/>
<dbReference type="OMA" id="AYKEHEC"/>
<dbReference type="OrthoDB" id="7396459at2759"/>
<dbReference type="Proteomes" id="UP000001056">
    <property type="component" value="Unassembled WGS sequence"/>
</dbReference>
<dbReference type="GO" id="GO:0030686">
    <property type="term" value="C:90S preribosome"/>
    <property type="evidence" value="ECO:0007669"/>
    <property type="project" value="EnsemblFungi"/>
</dbReference>
<dbReference type="GO" id="GO:0005730">
    <property type="term" value="C:nucleolus"/>
    <property type="evidence" value="ECO:0007669"/>
    <property type="project" value="UniProtKB-SubCell"/>
</dbReference>
<dbReference type="GO" id="GO:0005654">
    <property type="term" value="C:nucleoplasm"/>
    <property type="evidence" value="ECO:0007669"/>
    <property type="project" value="EnsemblFungi"/>
</dbReference>
<dbReference type="GO" id="GO:0030687">
    <property type="term" value="C:preribosome, large subunit precursor"/>
    <property type="evidence" value="ECO:0007669"/>
    <property type="project" value="EnsemblFungi"/>
</dbReference>
<dbReference type="GO" id="GO:0005524">
    <property type="term" value="F:ATP binding"/>
    <property type="evidence" value="ECO:0007669"/>
    <property type="project" value="UniProtKB-KW"/>
</dbReference>
<dbReference type="GO" id="GO:0016887">
    <property type="term" value="F:ATP hydrolysis activity"/>
    <property type="evidence" value="ECO:0007669"/>
    <property type="project" value="RHEA"/>
</dbReference>
<dbReference type="GO" id="GO:0003723">
    <property type="term" value="F:RNA binding"/>
    <property type="evidence" value="ECO:0007669"/>
    <property type="project" value="UniProtKB-KW"/>
</dbReference>
<dbReference type="GO" id="GO:0003724">
    <property type="term" value="F:RNA helicase activity"/>
    <property type="evidence" value="ECO:0007669"/>
    <property type="project" value="UniProtKB-EC"/>
</dbReference>
<dbReference type="GO" id="GO:1902626">
    <property type="term" value="P:assembly of large subunit precursor of preribosome"/>
    <property type="evidence" value="ECO:0007669"/>
    <property type="project" value="EnsemblFungi"/>
</dbReference>
<dbReference type="GO" id="GO:0000470">
    <property type="term" value="P:maturation of LSU-rRNA"/>
    <property type="evidence" value="ECO:0007669"/>
    <property type="project" value="EnsemblFungi"/>
</dbReference>
<dbReference type="CDD" id="cd17960">
    <property type="entry name" value="DEADc_DDX55"/>
    <property type="match status" value="1"/>
</dbReference>
<dbReference type="CDD" id="cd18787">
    <property type="entry name" value="SF2_C_DEAD"/>
    <property type="match status" value="1"/>
</dbReference>
<dbReference type="Gene3D" id="3.40.50.300">
    <property type="entry name" value="P-loop containing nucleotide triphosphate hydrolases"/>
    <property type="match status" value="2"/>
</dbReference>
<dbReference type="InterPro" id="IPR056330">
    <property type="entry name" value="CTT_SPB4"/>
</dbReference>
<dbReference type="InterPro" id="IPR011545">
    <property type="entry name" value="DEAD/DEAH_box_helicase_dom"/>
</dbReference>
<dbReference type="InterPro" id="IPR014001">
    <property type="entry name" value="Helicase_ATP-bd"/>
</dbReference>
<dbReference type="InterPro" id="IPR001650">
    <property type="entry name" value="Helicase_C-like"/>
</dbReference>
<dbReference type="InterPro" id="IPR027417">
    <property type="entry name" value="P-loop_NTPase"/>
</dbReference>
<dbReference type="InterPro" id="IPR000629">
    <property type="entry name" value="RNA-helicase_DEAD-box_CS"/>
</dbReference>
<dbReference type="InterPro" id="IPR014014">
    <property type="entry name" value="RNA_helicase_DEAD_Q_motif"/>
</dbReference>
<dbReference type="InterPro" id="IPR025313">
    <property type="entry name" value="SPB4-like_CTE"/>
</dbReference>
<dbReference type="PANTHER" id="PTHR24031">
    <property type="entry name" value="RNA HELICASE"/>
    <property type="match status" value="1"/>
</dbReference>
<dbReference type="Pfam" id="PF13959">
    <property type="entry name" value="CTE_SPB4"/>
    <property type="match status" value="1"/>
</dbReference>
<dbReference type="Pfam" id="PF23681">
    <property type="entry name" value="CTT_SPB4"/>
    <property type="match status" value="1"/>
</dbReference>
<dbReference type="Pfam" id="PF00270">
    <property type="entry name" value="DEAD"/>
    <property type="match status" value="1"/>
</dbReference>
<dbReference type="Pfam" id="PF00271">
    <property type="entry name" value="Helicase_C"/>
    <property type="match status" value="1"/>
</dbReference>
<dbReference type="SMART" id="SM00487">
    <property type="entry name" value="DEXDc"/>
    <property type="match status" value="1"/>
</dbReference>
<dbReference type="SMART" id="SM01178">
    <property type="entry name" value="DUF4217"/>
    <property type="match status" value="1"/>
</dbReference>
<dbReference type="SMART" id="SM00490">
    <property type="entry name" value="HELICc"/>
    <property type="match status" value="1"/>
</dbReference>
<dbReference type="SUPFAM" id="SSF52540">
    <property type="entry name" value="P-loop containing nucleoside triphosphate hydrolases"/>
    <property type="match status" value="1"/>
</dbReference>
<dbReference type="PROSITE" id="PS00039">
    <property type="entry name" value="DEAD_ATP_HELICASE"/>
    <property type="match status" value="1"/>
</dbReference>
<dbReference type="PROSITE" id="PS51192">
    <property type="entry name" value="HELICASE_ATP_BIND_1"/>
    <property type="match status" value="1"/>
</dbReference>
<dbReference type="PROSITE" id="PS51194">
    <property type="entry name" value="HELICASE_CTER"/>
    <property type="match status" value="1"/>
</dbReference>
<dbReference type="PROSITE" id="PS51195">
    <property type="entry name" value="Q_MOTIF"/>
    <property type="match status" value="1"/>
</dbReference>